<gene>
    <name type="primary">IRC23</name>
    <name type="ordered locus">YOR044W</name>
</gene>
<proteinExistence type="evidence at protein level"/>
<organism>
    <name type="scientific">Saccharomyces cerevisiae (strain ATCC 204508 / S288c)</name>
    <name type="common">Baker's yeast</name>
    <dbReference type="NCBI Taxonomy" id="559292"/>
    <lineage>
        <taxon>Eukaryota</taxon>
        <taxon>Fungi</taxon>
        <taxon>Dikarya</taxon>
        <taxon>Ascomycota</taxon>
        <taxon>Saccharomycotina</taxon>
        <taxon>Saccharomycetes</taxon>
        <taxon>Saccharomycetales</taxon>
        <taxon>Saccharomycetaceae</taxon>
        <taxon>Saccharomyces</taxon>
    </lineage>
</organism>
<dbReference type="EMBL" id="Z74952">
    <property type="protein sequence ID" value="CAA99235.1"/>
    <property type="molecule type" value="Genomic_DNA"/>
</dbReference>
<dbReference type="EMBL" id="AY692575">
    <property type="protein sequence ID" value="AAT92594.1"/>
    <property type="molecule type" value="Genomic_DNA"/>
</dbReference>
<dbReference type="EMBL" id="BK006948">
    <property type="protein sequence ID" value="DAA10826.1"/>
    <property type="molecule type" value="Genomic_DNA"/>
</dbReference>
<dbReference type="PIR" id="S66918">
    <property type="entry name" value="S66918"/>
</dbReference>
<dbReference type="RefSeq" id="NP_014687.1">
    <property type="nucleotide sequence ID" value="NM_001183463.1"/>
</dbReference>
<dbReference type="SMR" id="Q08416"/>
<dbReference type="BioGRID" id="34445">
    <property type="interactions" value="70"/>
</dbReference>
<dbReference type="FunCoup" id="Q08416">
    <property type="interactions" value="37"/>
</dbReference>
<dbReference type="IntAct" id="Q08416">
    <property type="interactions" value="1"/>
</dbReference>
<dbReference type="STRING" id="4932.YOR044W"/>
<dbReference type="iPTMnet" id="Q08416"/>
<dbReference type="PaxDb" id="4932-YOR044W"/>
<dbReference type="PeptideAtlas" id="Q08416"/>
<dbReference type="EnsemblFungi" id="YOR044W_mRNA">
    <property type="protein sequence ID" value="YOR044W"/>
    <property type="gene ID" value="YOR044W"/>
</dbReference>
<dbReference type="GeneID" id="854209"/>
<dbReference type="KEGG" id="sce:YOR044W"/>
<dbReference type="AGR" id="SGD:S000005570"/>
<dbReference type="SGD" id="S000005570">
    <property type="gene designation" value="IRC23"/>
</dbReference>
<dbReference type="VEuPathDB" id="FungiDB:YOR044W"/>
<dbReference type="eggNOG" id="ENOG502SCGA">
    <property type="taxonomic scope" value="Eukaryota"/>
</dbReference>
<dbReference type="HOGENOM" id="CLU_117784_0_0_1"/>
<dbReference type="InParanoid" id="Q08416"/>
<dbReference type="OrthoDB" id="4042108at2759"/>
<dbReference type="BioCyc" id="YEAST:G3O-33588-MONOMER"/>
<dbReference type="BioGRID-ORCS" id="854209">
    <property type="hits" value="2 hits in 10 CRISPR screens"/>
</dbReference>
<dbReference type="PRO" id="PR:Q08416"/>
<dbReference type="Proteomes" id="UP000002311">
    <property type="component" value="Chromosome XV"/>
</dbReference>
<dbReference type="RNAct" id="Q08416">
    <property type="molecule type" value="protein"/>
</dbReference>
<dbReference type="GO" id="GO:0005783">
    <property type="term" value="C:endoplasmic reticulum"/>
    <property type="evidence" value="ECO:0007005"/>
    <property type="project" value="SGD"/>
</dbReference>
<dbReference type="GO" id="GO:0005789">
    <property type="term" value="C:endoplasmic reticulum membrane"/>
    <property type="evidence" value="ECO:0007669"/>
    <property type="project" value="UniProtKB-SubCell"/>
</dbReference>
<evidence type="ECO:0000255" key="1"/>
<evidence type="ECO:0000269" key="2">
    <source>
    </source>
</evidence>
<evidence type="ECO:0000269" key="3">
    <source>
    </source>
</evidence>
<evidence type="ECO:0000269" key="4">
    <source>
    </source>
</evidence>
<evidence type="ECO:0000269" key="5">
    <source>
    </source>
</evidence>
<comment type="function">
    <text>Is probably involved in a pathway contributing to genomic integrity.</text>
</comment>
<comment type="subcellular location">
    <subcellularLocation>
        <location evidence="2">Endoplasmic reticulum membrane</location>
        <topology evidence="2">Multi-pass membrane protein</topology>
    </subcellularLocation>
</comment>
<comment type="induction">
    <text evidence="4">Between 15 and 30 minutes due to fermentation progress.</text>
</comment>
<comment type="disruption phenotype">
    <text evidence="5">Displays increased levels of spontaneous RAD52 foci in proliferating diploid cells.</text>
</comment>
<comment type="miscellaneous">
    <text evidence="3">Present with 4280 molecules/cell in log phase SD medium.</text>
</comment>
<sequence length="157" mass="18092">MIEALEIVLLLVIQSLQYICRTCIAFLLIPFLGLYAFDLFLYVYRMILYLSQMFNYKRKLGRSKTNNRPHSPRLHKIYSSGDCMDTLIGQVRDLRVFLLSTIHSHSKRFFSTRFQTKSGINSAIDANDVETTSDVSSFTNLHLTRSSEEGYYIAGSI</sequence>
<reference key="1">
    <citation type="journal article" date="1997" name="Nature">
        <title>The nucleotide sequence of Saccharomyces cerevisiae chromosome XV.</title>
        <authorList>
            <person name="Dujon B."/>
            <person name="Albermann K."/>
            <person name="Aldea M."/>
            <person name="Alexandraki D."/>
            <person name="Ansorge W."/>
            <person name="Arino J."/>
            <person name="Benes V."/>
            <person name="Bohn C."/>
            <person name="Bolotin-Fukuhara M."/>
            <person name="Bordonne R."/>
            <person name="Boyer J."/>
            <person name="Camasses A."/>
            <person name="Casamayor A."/>
            <person name="Casas C."/>
            <person name="Cheret G."/>
            <person name="Cziepluch C."/>
            <person name="Daignan-Fornier B."/>
            <person name="Dang V.-D."/>
            <person name="de Haan M."/>
            <person name="Delius H."/>
            <person name="Durand P."/>
            <person name="Fairhead C."/>
            <person name="Feldmann H."/>
            <person name="Gaillon L."/>
            <person name="Galisson F."/>
            <person name="Gamo F.-J."/>
            <person name="Gancedo C."/>
            <person name="Goffeau A."/>
            <person name="Goulding S.E."/>
            <person name="Grivell L.A."/>
            <person name="Habbig B."/>
            <person name="Hand N.J."/>
            <person name="Hani J."/>
            <person name="Hattenhorst U."/>
            <person name="Hebling U."/>
            <person name="Hernando Y."/>
            <person name="Herrero E."/>
            <person name="Heumann K."/>
            <person name="Hiesel R."/>
            <person name="Hilger F."/>
            <person name="Hofmann B."/>
            <person name="Hollenberg C.P."/>
            <person name="Hughes B."/>
            <person name="Jauniaux J.-C."/>
            <person name="Kalogeropoulos A."/>
            <person name="Katsoulou C."/>
            <person name="Kordes E."/>
            <person name="Lafuente M.J."/>
            <person name="Landt O."/>
            <person name="Louis E.J."/>
            <person name="Maarse A.C."/>
            <person name="Madania A."/>
            <person name="Mannhaupt G."/>
            <person name="Marck C."/>
            <person name="Martin R.P."/>
            <person name="Mewes H.-W."/>
            <person name="Michaux G."/>
            <person name="Paces V."/>
            <person name="Parle-McDermott A.G."/>
            <person name="Pearson B.M."/>
            <person name="Perrin A."/>
            <person name="Pettersson B."/>
            <person name="Poch O."/>
            <person name="Pohl T.M."/>
            <person name="Poirey R."/>
            <person name="Portetelle D."/>
            <person name="Pujol A."/>
            <person name="Purnelle B."/>
            <person name="Ramezani Rad M."/>
            <person name="Rechmann S."/>
            <person name="Schwager C."/>
            <person name="Schweizer M."/>
            <person name="Sor F."/>
            <person name="Sterky F."/>
            <person name="Tarassov I.A."/>
            <person name="Teodoru C."/>
            <person name="Tettelin H."/>
            <person name="Thierry A."/>
            <person name="Tobiasch E."/>
            <person name="Tzermia M."/>
            <person name="Uhlen M."/>
            <person name="Unseld M."/>
            <person name="Valens M."/>
            <person name="Vandenbol M."/>
            <person name="Vetter I."/>
            <person name="Vlcek C."/>
            <person name="Voet M."/>
            <person name="Volckaert G."/>
            <person name="Voss H."/>
            <person name="Wambutt R."/>
            <person name="Wedler H."/>
            <person name="Wiemann S."/>
            <person name="Winsor B."/>
            <person name="Wolfe K.H."/>
            <person name="Zollner A."/>
            <person name="Zumstein E."/>
            <person name="Kleine K."/>
        </authorList>
    </citation>
    <scope>NUCLEOTIDE SEQUENCE [LARGE SCALE GENOMIC DNA]</scope>
    <source>
        <strain>ATCC 204508 / S288c</strain>
    </source>
</reference>
<reference key="2">
    <citation type="journal article" date="2014" name="G3 (Bethesda)">
        <title>The reference genome sequence of Saccharomyces cerevisiae: Then and now.</title>
        <authorList>
            <person name="Engel S.R."/>
            <person name="Dietrich F.S."/>
            <person name="Fisk D.G."/>
            <person name="Binkley G."/>
            <person name="Balakrishnan R."/>
            <person name="Costanzo M.C."/>
            <person name="Dwight S.S."/>
            <person name="Hitz B.C."/>
            <person name="Karra K."/>
            <person name="Nash R.S."/>
            <person name="Weng S."/>
            <person name="Wong E.D."/>
            <person name="Lloyd P."/>
            <person name="Skrzypek M.S."/>
            <person name="Miyasato S.R."/>
            <person name="Simison M."/>
            <person name="Cherry J.M."/>
        </authorList>
    </citation>
    <scope>GENOME REANNOTATION</scope>
    <source>
        <strain>ATCC 204508 / S288c</strain>
    </source>
</reference>
<reference key="3">
    <citation type="journal article" date="2007" name="Genome Res.">
        <title>Approaching a complete repository of sequence-verified protein-encoding clones for Saccharomyces cerevisiae.</title>
        <authorList>
            <person name="Hu Y."/>
            <person name="Rolfs A."/>
            <person name="Bhullar B."/>
            <person name="Murthy T.V.S."/>
            <person name="Zhu C."/>
            <person name="Berger M.F."/>
            <person name="Camargo A.A."/>
            <person name="Kelley F."/>
            <person name="McCarron S."/>
            <person name="Jepson D."/>
            <person name="Richardson A."/>
            <person name="Raphael J."/>
            <person name="Moreira D."/>
            <person name="Taycher E."/>
            <person name="Zuo D."/>
            <person name="Mohr S."/>
            <person name="Kane M.F."/>
            <person name="Williamson J."/>
            <person name="Simpson A.J.G."/>
            <person name="Bulyk M.L."/>
            <person name="Harlow E."/>
            <person name="Marsischky G."/>
            <person name="Kolodner R.D."/>
            <person name="LaBaer J."/>
        </authorList>
    </citation>
    <scope>NUCLEOTIDE SEQUENCE [GENOMIC DNA]</scope>
    <source>
        <strain>ATCC 204508 / S288c</strain>
    </source>
</reference>
<reference key="4">
    <citation type="journal article" date="2003" name="Nature">
        <title>Global analysis of protein localization in budding yeast.</title>
        <authorList>
            <person name="Huh W.-K."/>
            <person name="Falvo J.V."/>
            <person name="Gerke L.C."/>
            <person name="Carroll A.S."/>
            <person name="Howson R.W."/>
            <person name="Weissman J.S."/>
            <person name="O'Shea E.K."/>
        </authorList>
    </citation>
    <scope>SUBCELLULAR LOCATION [LARGE SCALE ANALYSIS]</scope>
</reference>
<reference key="5">
    <citation type="journal article" date="2003" name="Nature">
        <title>Global analysis of protein expression in yeast.</title>
        <authorList>
            <person name="Ghaemmaghami S."/>
            <person name="Huh W.-K."/>
            <person name="Bower K."/>
            <person name="Howson R.W."/>
            <person name="Belle A."/>
            <person name="Dephoure N."/>
            <person name="O'Shea E.K."/>
            <person name="Weissman J.S."/>
        </authorList>
    </citation>
    <scope>LEVEL OF PROTEIN EXPRESSION [LARGE SCALE ANALYSIS]</scope>
</reference>
<reference key="6">
    <citation type="journal article" date="2006" name="Proc. Natl. Acad. Sci. U.S.A.">
        <title>A global topology map of the Saccharomyces cerevisiae membrane proteome.</title>
        <authorList>
            <person name="Kim H."/>
            <person name="Melen K."/>
            <person name="Oesterberg M."/>
            <person name="von Heijne G."/>
        </authorList>
    </citation>
    <scope>TOPOLOGY [LARGE SCALE ANALYSIS]</scope>
    <source>
        <strain>ATCC 208353 / W303-1A</strain>
    </source>
</reference>
<reference key="7">
    <citation type="journal article" date="2006" name="Food Microbiol.">
        <title>Functional genomic analysis of commercial baker's yeast during initial stages of model dough-fermentation.</title>
        <authorList>
            <person name="Tanaka F."/>
            <person name="Ando A."/>
            <person name="Nakamura T."/>
            <person name="Takagi H."/>
            <person name="Shima J."/>
        </authorList>
    </citation>
    <scope>INDUCTION</scope>
</reference>
<reference key="8">
    <citation type="journal article" date="2007" name="PLoS Genet.">
        <title>Genome-wide analysis of Rad52 foci reveals diverse mechanisms impacting recombination.</title>
        <authorList>
            <person name="Alvaro D."/>
            <person name="Lisby M."/>
            <person name="Rothstein R."/>
        </authorList>
    </citation>
    <scope>DISRUPTION PHENOTYPE</scope>
</reference>
<protein>
    <recommendedName>
        <fullName>Increased recombination centers protein 23</fullName>
    </recommendedName>
</protein>
<feature type="chain" id="PRO_0000237647" description="Increased recombination centers protein 23">
    <location>
        <begin position="1"/>
        <end position="157"/>
    </location>
</feature>
<feature type="topological domain" description="Cytoplasmic" evidence="1">
    <location>
        <begin position="1"/>
        <end position="6"/>
    </location>
</feature>
<feature type="transmembrane region" description="Helical" evidence="1">
    <location>
        <begin position="7"/>
        <end position="29"/>
    </location>
</feature>
<feature type="topological domain" description="Lumenal" evidence="1">
    <location>
        <begin position="30"/>
        <end position="33"/>
    </location>
</feature>
<feature type="transmembrane region" description="Helical" evidence="1">
    <location>
        <begin position="34"/>
        <end position="56"/>
    </location>
</feature>
<feature type="topological domain" description="Cytoplasmic" evidence="1">
    <location>
        <begin position="57"/>
        <end position="157"/>
    </location>
</feature>
<name>IRC23_YEAST</name>
<keyword id="KW-0256">Endoplasmic reticulum</keyword>
<keyword id="KW-0472">Membrane</keyword>
<keyword id="KW-1185">Reference proteome</keyword>
<keyword id="KW-0812">Transmembrane</keyword>
<keyword id="KW-1133">Transmembrane helix</keyword>
<accession>Q08416</accession>
<accession>D6W2B0</accession>